<name>SYGB_ACIAD</name>
<organism>
    <name type="scientific">Acinetobacter baylyi (strain ATCC 33305 / BD413 / ADP1)</name>
    <dbReference type="NCBI Taxonomy" id="62977"/>
    <lineage>
        <taxon>Bacteria</taxon>
        <taxon>Pseudomonadati</taxon>
        <taxon>Pseudomonadota</taxon>
        <taxon>Gammaproteobacteria</taxon>
        <taxon>Moraxellales</taxon>
        <taxon>Moraxellaceae</taxon>
        <taxon>Acinetobacter</taxon>
    </lineage>
</organism>
<gene>
    <name evidence="1" type="primary">glyS</name>
    <name type="ordered locus">ACIAD3269</name>
</gene>
<sequence length="689" mass="74936">MSKHTVLFELGCEELPPKSLKTLRDALQAETVKGLKDAGLAFASIEAYAAPRRLALKIVDVDGAQADTQKRFDGPAVQAAYDAEGKPTKALEGFMRGQGITADQVSTFQAGKVEKVCYLKDVKGQTLDALLPQILQTALDNLPIAKRMRSAASRTEFVRPVKWVVLLKDDQIIEATIQDHQAGNVTYGHRFHAPEAVTLAHANDYLAALEKAYVVANFEKRQATIQEQVKKLADEVNATAIVPADLLDEVTSLVEWPVALRANFEERFLAVPQEALITTMQDNQKYFCLINSEGKLQPYFITVSNIESKDPTQIIEGNEKVVRPRLSDAEFFFLQDQKQPLASRKEKLANMVFQAQLGTLWDKSTRIAKLAVALSPITGANPADAEKAALLAKCDLTSELVGEFPELQGIAGTYYARIEGENTEVSEALGEQYLPKFAGDVLPKTKTGTTIALADRLDTLVGIFGIGQAPTGSKDPFALRRSAIGILRLIIENELDVTIEELVNLALQGYGDIVKDHDKTLADAVAFLEGRYRAKYEDQGVAVDVLQAVQALAPKSPLDFDKRVNAVNHFRALPEAAALAAANKRVANILAKEAAPEGSVVEANLVEDAEKALFAELQAVTPAVEPLLAAKDYTAALSKLAALRAPIDAFFDGVMVMADDADLKANRLRLLAQLRHLFTVVADVSVLQG</sequence>
<accession>Q6F7L8</accession>
<protein>
    <recommendedName>
        <fullName evidence="1">Glycine--tRNA ligase beta subunit</fullName>
        <ecNumber evidence="1">6.1.1.14</ecNumber>
    </recommendedName>
    <alternativeName>
        <fullName evidence="1">Glycyl-tRNA synthetase beta subunit</fullName>
        <shortName evidence="1">GlyRS</shortName>
    </alternativeName>
</protein>
<keyword id="KW-0030">Aminoacyl-tRNA synthetase</keyword>
<keyword id="KW-0067">ATP-binding</keyword>
<keyword id="KW-0963">Cytoplasm</keyword>
<keyword id="KW-0436">Ligase</keyword>
<keyword id="KW-0547">Nucleotide-binding</keyword>
<keyword id="KW-0648">Protein biosynthesis</keyword>
<reference key="1">
    <citation type="journal article" date="2004" name="Nucleic Acids Res.">
        <title>Unique features revealed by the genome sequence of Acinetobacter sp. ADP1, a versatile and naturally transformation competent bacterium.</title>
        <authorList>
            <person name="Barbe V."/>
            <person name="Vallenet D."/>
            <person name="Fonknechten N."/>
            <person name="Kreimeyer A."/>
            <person name="Oztas S."/>
            <person name="Labarre L."/>
            <person name="Cruveiller S."/>
            <person name="Robert C."/>
            <person name="Duprat S."/>
            <person name="Wincker P."/>
            <person name="Ornston L.N."/>
            <person name="Weissenbach J."/>
            <person name="Marliere P."/>
            <person name="Cohen G.N."/>
            <person name="Medigue C."/>
        </authorList>
    </citation>
    <scope>NUCLEOTIDE SEQUENCE [LARGE SCALE GENOMIC DNA]</scope>
    <source>
        <strain>ATCC 33305 / BD413 / ADP1</strain>
    </source>
</reference>
<feature type="chain" id="PRO_1000006347" description="Glycine--tRNA ligase beta subunit">
    <location>
        <begin position="1"/>
        <end position="689"/>
    </location>
</feature>
<comment type="catalytic activity">
    <reaction evidence="1">
        <text>tRNA(Gly) + glycine + ATP = glycyl-tRNA(Gly) + AMP + diphosphate</text>
        <dbReference type="Rhea" id="RHEA:16013"/>
        <dbReference type="Rhea" id="RHEA-COMP:9664"/>
        <dbReference type="Rhea" id="RHEA-COMP:9683"/>
        <dbReference type="ChEBI" id="CHEBI:30616"/>
        <dbReference type="ChEBI" id="CHEBI:33019"/>
        <dbReference type="ChEBI" id="CHEBI:57305"/>
        <dbReference type="ChEBI" id="CHEBI:78442"/>
        <dbReference type="ChEBI" id="CHEBI:78522"/>
        <dbReference type="ChEBI" id="CHEBI:456215"/>
        <dbReference type="EC" id="6.1.1.14"/>
    </reaction>
</comment>
<comment type="subunit">
    <text evidence="1">Tetramer of two alpha and two beta subunits.</text>
</comment>
<comment type="subcellular location">
    <subcellularLocation>
        <location evidence="1">Cytoplasm</location>
    </subcellularLocation>
</comment>
<comment type="similarity">
    <text evidence="1">Belongs to the class-II aminoacyl-tRNA synthetase family.</text>
</comment>
<proteinExistence type="inferred from homology"/>
<evidence type="ECO:0000255" key="1">
    <source>
        <dbReference type="HAMAP-Rule" id="MF_00255"/>
    </source>
</evidence>
<dbReference type="EC" id="6.1.1.14" evidence="1"/>
<dbReference type="EMBL" id="CR543861">
    <property type="protein sequence ID" value="CAG69947.1"/>
    <property type="molecule type" value="Genomic_DNA"/>
</dbReference>
<dbReference type="RefSeq" id="WP_004923947.1">
    <property type="nucleotide sequence ID" value="NC_005966.1"/>
</dbReference>
<dbReference type="SMR" id="Q6F7L8"/>
<dbReference type="STRING" id="202950.GCA_001485005_02120"/>
<dbReference type="GeneID" id="45235478"/>
<dbReference type="KEGG" id="aci:ACIAD3269"/>
<dbReference type="eggNOG" id="COG0751">
    <property type="taxonomic scope" value="Bacteria"/>
</dbReference>
<dbReference type="HOGENOM" id="CLU_007220_2_2_6"/>
<dbReference type="OrthoDB" id="9775440at2"/>
<dbReference type="BioCyc" id="ASP62977:ACIAD_RS14815-MONOMER"/>
<dbReference type="Proteomes" id="UP000000430">
    <property type="component" value="Chromosome"/>
</dbReference>
<dbReference type="GO" id="GO:0005829">
    <property type="term" value="C:cytosol"/>
    <property type="evidence" value="ECO:0007669"/>
    <property type="project" value="TreeGrafter"/>
</dbReference>
<dbReference type="GO" id="GO:0004814">
    <property type="term" value="F:arginine-tRNA ligase activity"/>
    <property type="evidence" value="ECO:0007669"/>
    <property type="project" value="InterPro"/>
</dbReference>
<dbReference type="GO" id="GO:0005524">
    <property type="term" value="F:ATP binding"/>
    <property type="evidence" value="ECO:0007669"/>
    <property type="project" value="UniProtKB-UniRule"/>
</dbReference>
<dbReference type="GO" id="GO:0004820">
    <property type="term" value="F:glycine-tRNA ligase activity"/>
    <property type="evidence" value="ECO:0007669"/>
    <property type="project" value="UniProtKB-UniRule"/>
</dbReference>
<dbReference type="GO" id="GO:0006420">
    <property type="term" value="P:arginyl-tRNA aminoacylation"/>
    <property type="evidence" value="ECO:0007669"/>
    <property type="project" value="InterPro"/>
</dbReference>
<dbReference type="GO" id="GO:0006426">
    <property type="term" value="P:glycyl-tRNA aminoacylation"/>
    <property type="evidence" value="ECO:0007669"/>
    <property type="project" value="UniProtKB-UniRule"/>
</dbReference>
<dbReference type="HAMAP" id="MF_00255">
    <property type="entry name" value="Gly_tRNA_synth_beta"/>
    <property type="match status" value="1"/>
</dbReference>
<dbReference type="InterPro" id="IPR008909">
    <property type="entry name" value="DALR_anticod-bd"/>
</dbReference>
<dbReference type="InterPro" id="IPR015944">
    <property type="entry name" value="Gly-tRNA-synth_bsu"/>
</dbReference>
<dbReference type="InterPro" id="IPR006194">
    <property type="entry name" value="Gly-tRNA-synth_heterodimer"/>
</dbReference>
<dbReference type="NCBIfam" id="TIGR00211">
    <property type="entry name" value="glyS"/>
    <property type="match status" value="1"/>
</dbReference>
<dbReference type="PANTHER" id="PTHR30075:SF2">
    <property type="entry name" value="GLYCINE--TRNA LIGASE, CHLOROPLASTIC_MITOCHONDRIAL 2"/>
    <property type="match status" value="1"/>
</dbReference>
<dbReference type="PANTHER" id="PTHR30075">
    <property type="entry name" value="GLYCYL-TRNA SYNTHETASE"/>
    <property type="match status" value="1"/>
</dbReference>
<dbReference type="Pfam" id="PF05746">
    <property type="entry name" value="DALR_1"/>
    <property type="match status" value="1"/>
</dbReference>
<dbReference type="Pfam" id="PF02092">
    <property type="entry name" value="tRNA_synt_2f"/>
    <property type="match status" value="1"/>
</dbReference>
<dbReference type="PRINTS" id="PR01045">
    <property type="entry name" value="TRNASYNTHGB"/>
</dbReference>
<dbReference type="SUPFAM" id="SSF109604">
    <property type="entry name" value="HD-domain/PDEase-like"/>
    <property type="match status" value="1"/>
</dbReference>
<dbReference type="PROSITE" id="PS50861">
    <property type="entry name" value="AA_TRNA_LIGASE_II_GLYAB"/>
    <property type="match status" value="1"/>
</dbReference>